<name>VLN3_ORYSJ</name>
<keyword id="KW-0117">Actin capping</keyword>
<keyword id="KW-0009">Actin-binding</keyword>
<keyword id="KW-0106">Calcium</keyword>
<keyword id="KW-0963">Cytoplasm</keyword>
<keyword id="KW-0206">Cytoskeleton</keyword>
<keyword id="KW-1185">Reference proteome</keyword>
<keyword id="KW-0677">Repeat</keyword>
<accession>Q67U26</accession>
<accession>B9FQC0</accession>
<feature type="chain" id="PRO_0000438165" description="Villin-3">
    <location>
        <begin position="1"/>
        <end position="970"/>
    </location>
</feature>
<feature type="repeat" description="Gelsolin-like 1" evidence="2">
    <location>
        <begin position="31"/>
        <end position="111"/>
    </location>
</feature>
<feature type="repeat" description="Gelsolin-like 2" evidence="2">
    <location>
        <begin position="151"/>
        <end position="219"/>
    </location>
</feature>
<feature type="repeat" description="Gelsolin-like 3" evidence="2">
    <location>
        <begin position="273"/>
        <end position="339"/>
    </location>
</feature>
<feature type="repeat" description="Gelsolin-like 4" evidence="2">
    <location>
        <begin position="416"/>
        <end position="484"/>
    </location>
</feature>
<feature type="repeat" description="Gelsolin-like 5" evidence="2">
    <location>
        <begin position="536"/>
        <end position="576"/>
    </location>
</feature>
<feature type="repeat" description="Gelsolin-like 6" evidence="2">
    <location>
        <begin position="643"/>
        <end position="714"/>
    </location>
</feature>
<feature type="domain" description="HP" evidence="3">
    <location>
        <begin position="905"/>
        <end position="970"/>
    </location>
</feature>
<feature type="region of interest" description="Disordered" evidence="4">
    <location>
        <begin position="741"/>
        <end position="908"/>
    </location>
</feature>
<feature type="compositionally biased region" description="Polar residues" evidence="4">
    <location>
        <begin position="755"/>
        <end position="778"/>
    </location>
</feature>
<feature type="compositionally biased region" description="Low complexity" evidence="4">
    <location>
        <begin position="833"/>
        <end position="842"/>
    </location>
</feature>
<feature type="compositionally biased region" description="Polar residues" evidence="4">
    <location>
        <begin position="878"/>
        <end position="893"/>
    </location>
</feature>
<comment type="function">
    <text evidence="5">Ca(2+)-regulated actin-binding protein. Binds actin microfilaments (MFs). Involved in actin filament bundling, severing and capping. Caps the barbed end of actin filaments and is able to sever them in a calcium-dependent manner. MF severing is promoted by VLN1.</text>
</comment>
<comment type="subcellular location">
    <subcellularLocation>
        <location evidence="1">Cytoplasm</location>
        <location evidence="1">Cytoskeleton</location>
    </subcellularLocation>
</comment>
<comment type="tissue specificity">
    <text evidence="5">Expressed in roots, young leaves, and inflorescences, mostly in the vasculature of roots, leaves, and filaments of the anthers and in epidermal cells of the elongation zone and root hairs. Also detected in guard cells.</text>
</comment>
<comment type="similarity">
    <text evidence="7">Belongs to the villin/gelsolin family.</text>
</comment>
<comment type="sequence caution" evidence="7">
    <conflict type="erroneous initiation">
        <sequence resource="EMBL-CDS" id="BAD38345"/>
    </conflict>
    <text>Extended N-terminus.</text>
</comment>
<comment type="sequence caution" evidence="7">
    <conflict type="erroneous initiation">
        <sequence resource="EMBL-CDS" id="BAD46401"/>
    </conflict>
    <text>Extended N-terminus.</text>
</comment>
<comment type="sequence caution" evidence="7">
    <conflict type="erroneous initiation">
        <sequence resource="EMBL-CDS" id="BAF20177"/>
    </conflict>
    <text>Extended N-terminus.</text>
</comment>
<comment type="sequence caution" evidence="7">
    <conflict type="erroneous initiation">
        <sequence resource="EMBL-CDS" id="BAS98964"/>
    </conflict>
    <text>Extended N-terminus.</text>
</comment>
<comment type="sequence caution" evidence="7">
    <conflict type="erroneous initiation">
        <sequence resource="EMBL-CDS" id="EEE66162"/>
    </conflict>
    <text>Extended N-terminus.</text>
</comment>
<organism>
    <name type="scientific">Oryza sativa subsp. japonica</name>
    <name type="common">Rice</name>
    <dbReference type="NCBI Taxonomy" id="39947"/>
    <lineage>
        <taxon>Eukaryota</taxon>
        <taxon>Viridiplantae</taxon>
        <taxon>Streptophyta</taxon>
        <taxon>Embryophyta</taxon>
        <taxon>Tracheophyta</taxon>
        <taxon>Spermatophyta</taxon>
        <taxon>Magnoliopsida</taxon>
        <taxon>Liliopsida</taxon>
        <taxon>Poales</taxon>
        <taxon>Poaceae</taxon>
        <taxon>BOP clade</taxon>
        <taxon>Oryzoideae</taxon>
        <taxon>Oryzeae</taxon>
        <taxon>Oryzinae</taxon>
        <taxon>Oryza</taxon>
        <taxon>Oryza sativa</taxon>
    </lineage>
</organism>
<dbReference type="EMBL" id="AP005760">
    <property type="protein sequence ID" value="BAD38345.1"/>
    <property type="status" value="ALT_INIT"/>
    <property type="molecule type" value="Genomic_DNA"/>
</dbReference>
<dbReference type="EMBL" id="AP005769">
    <property type="protein sequence ID" value="BAD46401.1"/>
    <property type="status" value="ALT_INIT"/>
    <property type="molecule type" value="Genomic_DNA"/>
</dbReference>
<dbReference type="EMBL" id="AP008212">
    <property type="protein sequence ID" value="BAF20177.1"/>
    <property type="status" value="ALT_INIT"/>
    <property type="molecule type" value="Genomic_DNA"/>
</dbReference>
<dbReference type="EMBL" id="AP014962">
    <property type="protein sequence ID" value="BAS98964.1"/>
    <property type="status" value="ALT_INIT"/>
    <property type="molecule type" value="Genomic_DNA"/>
</dbReference>
<dbReference type="EMBL" id="CM000143">
    <property type="protein sequence ID" value="EEE66162.1"/>
    <property type="status" value="ALT_INIT"/>
    <property type="molecule type" value="Genomic_DNA"/>
</dbReference>
<dbReference type="SMR" id="Q67U26"/>
<dbReference type="FunCoup" id="Q67U26">
    <property type="interactions" value="629"/>
</dbReference>
<dbReference type="STRING" id="39947.Q67U26"/>
<dbReference type="iPTMnet" id="Q67U26"/>
<dbReference type="PaxDb" id="39947-Q67U26"/>
<dbReference type="KEGG" id="dosa:Os06g0659300"/>
<dbReference type="KEGG" id="osa:4341731"/>
<dbReference type="eggNOG" id="KOG0443">
    <property type="taxonomic scope" value="Eukaryota"/>
</dbReference>
<dbReference type="HOGENOM" id="CLU_002568_2_1_1"/>
<dbReference type="InParanoid" id="Q67U26"/>
<dbReference type="OrthoDB" id="6375767at2759"/>
<dbReference type="Proteomes" id="UP000000763">
    <property type="component" value="Chromosome 6"/>
</dbReference>
<dbReference type="Proteomes" id="UP000007752">
    <property type="component" value="Chromosome 6"/>
</dbReference>
<dbReference type="Proteomes" id="UP000059680">
    <property type="component" value="Chromosome 6"/>
</dbReference>
<dbReference type="GO" id="GO:0032432">
    <property type="term" value="C:actin filament bundle"/>
    <property type="evidence" value="ECO:0000314"/>
    <property type="project" value="UniProtKB"/>
</dbReference>
<dbReference type="GO" id="GO:0005737">
    <property type="term" value="C:cytoplasm"/>
    <property type="evidence" value="ECO:0007669"/>
    <property type="project" value="UniProtKB-KW"/>
</dbReference>
<dbReference type="GO" id="GO:0051015">
    <property type="term" value="F:actin filament binding"/>
    <property type="evidence" value="ECO:0000314"/>
    <property type="project" value="UniProtKB"/>
</dbReference>
<dbReference type="GO" id="GO:0051693">
    <property type="term" value="P:actin filament capping"/>
    <property type="evidence" value="ECO:0000314"/>
    <property type="project" value="UniProtKB"/>
</dbReference>
<dbReference type="GO" id="GO:0007015">
    <property type="term" value="P:actin filament organization"/>
    <property type="evidence" value="ECO:0000314"/>
    <property type="project" value="UniProtKB"/>
</dbReference>
<dbReference type="GO" id="GO:0051014">
    <property type="term" value="P:actin filament severing"/>
    <property type="evidence" value="ECO:0000314"/>
    <property type="project" value="UniProtKB"/>
</dbReference>
<dbReference type="GO" id="GO:0051592">
    <property type="term" value="P:response to calcium ion"/>
    <property type="evidence" value="ECO:0000314"/>
    <property type="project" value="UniProtKB"/>
</dbReference>
<dbReference type="CDD" id="cd11290">
    <property type="entry name" value="gelsolin_S1_like"/>
    <property type="match status" value="1"/>
</dbReference>
<dbReference type="CDD" id="cd11289">
    <property type="entry name" value="gelsolin_S2_like"/>
    <property type="match status" value="1"/>
</dbReference>
<dbReference type="CDD" id="cd11292">
    <property type="entry name" value="gelsolin_S3_like"/>
    <property type="match status" value="1"/>
</dbReference>
<dbReference type="CDD" id="cd11293">
    <property type="entry name" value="gelsolin_S4_like"/>
    <property type="match status" value="1"/>
</dbReference>
<dbReference type="CDD" id="cd11288">
    <property type="entry name" value="gelsolin_S5_like"/>
    <property type="match status" value="1"/>
</dbReference>
<dbReference type="CDD" id="cd11291">
    <property type="entry name" value="gelsolin_S6_like"/>
    <property type="match status" value="1"/>
</dbReference>
<dbReference type="FunFam" id="3.40.20.10:FF:000001">
    <property type="entry name" value="Gelsolin"/>
    <property type="match status" value="1"/>
</dbReference>
<dbReference type="FunFam" id="3.40.20.10:FF:000002">
    <property type="entry name" value="Gelsolin"/>
    <property type="match status" value="1"/>
</dbReference>
<dbReference type="FunFam" id="3.40.20.10:FF:000033">
    <property type="entry name" value="Villin-4"/>
    <property type="match status" value="1"/>
</dbReference>
<dbReference type="FunFam" id="3.40.20.10:FF:000039">
    <property type="entry name" value="Villin-4"/>
    <property type="match status" value="1"/>
</dbReference>
<dbReference type="FunFam" id="1.10.950.10:FF:000004">
    <property type="entry name" value="Villin-like 1"/>
    <property type="match status" value="1"/>
</dbReference>
<dbReference type="FunFam" id="3.40.20.10:FF:000028">
    <property type="entry name" value="Villin-like 1"/>
    <property type="match status" value="1"/>
</dbReference>
<dbReference type="FunFam" id="3.40.20.10:FF:000038">
    <property type="entry name" value="Villin-like 1"/>
    <property type="match status" value="1"/>
</dbReference>
<dbReference type="Gene3D" id="3.40.20.10">
    <property type="entry name" value="Severin"/>
    <property type="match status" value="6"/>
</dbReference>
<dbReference type="Gene3D" id="1.10.950.10">
    <property type="entry name" value="Villin headpiece domain"/>
    <property type="match status" value="1"/>
</dbReference>
<dbReference type="InterPro" id="IPR029006">
    <property type="entry name" value="ADF-H/Gelsolin-like_dom_sf"/>
</dbReference>
<dbReference type="InterPro" id="IPR007123">
    <property type="entry name" value="Gelsolin-like_dom"/>
</dbReference>
<dbReference type="InterPro" id="IPR036180">
    <property type="entry name" value="Gelsolin-like_dom_sf"/>
</dbReference>
<dbReference type="InterPro" id="IPR007122">
    <property type="entry name" value="Villin/Gelsolin"/>
</dbReference>
<dbReference type="InterPro" id="IPR003128">
    <property type="entry name" value="Villin_headpiece"/>
</dbReference>
<dbReference type="InterPro" id="IPR036886">
    <property type="entry name" value="Villin_headpiece_dom_sf"/>
</dbReference>
<dbReference type="PANTHER" id="PTHR11977">
    <property type="entry name" value="VILLIN"/>
    <property type="match status" value="1"/>
</dbReference>
<dbReference type="PANTHER" id="PTHR11977:SF91">
    <property type="entry name" value="VILLIN-3"/>
    <property type="match status" value="1"/>
</dbReference>
<dbReference type="Pfam" id="PF00626">
    <property type="entry name" value="Gelsolin"/>
    <property type="match status" value="5"/>
</dbReference>
<dbReference type="Pfam" id="PF02209">
    <property type="entry name" value="VHP"/>
    <property type="match status" value="1"/>
</dbReference>
<dbReference type="PRINTS" id="PR00597">
    <property type="entry name" value="GELSOLIN"/>
</dbReference>
<dbReference type="SMART" id="SM00262">
    <property type="entry name" value="GEL"/>
    <property type="match status" value="6"/>
</dbReference>
<dbReference type="SMART" id="SM00153">
    <property type="entry name" value="VHP"/>
    <property type="match status" value="1"/>
</dbReference>
<dbReference type="SUPFAM" id="SSF55753">
    <property type="entry name" value="Actin depolymerizing proteins"/>
    <property type="match status" value="5"/>
</dbReference>
<dbReference type="SUPFAM" id="SSF82754">
    <property type="entry name" value="C-terminal, gelsolin-like domain of Sec23/24"/>
    <property type="match status" value="1"/>
</dbReference>
<dbReference type="SUPFAM" id="SSF47050">
    <property type="entry name" value="VHP, Villin headpiece domain"/>
    <property type="match status" value="1"/>
</dbReference>
<dbReference type="PROSITE" id="PS51089">
    <property type="entry name" value="HP"/>
    <property type="match status" value="1"/>
</dbReference>
<proteinExistence type="evidence at transcript level"/>
<reference key="1">
    <citation type="journal article" date="2005" name="Nature">
        <title>The map-based sequence of the rice genome.</title>
        <authorList>
            <consortium name="International rice genome sequencing project (IRGSP)"/>
        </authorList>
    </citation>
    <scope>NUCLEOTIDE SEQUENCE [LARGE SCALE GENOMIC DNA]</scope>
    <source>
        <strain>cv. Nipponbare</strain>
    </source>
</reference>
<reference key="2">
    <citation type="journal article" date="2008" name="Nucleic Acids Res.">
        <title>The rice annotation project database (RAP-DB): 2008 update.</title>
        <authorList>
            <consortium name="The rice annotation project (RAP)"/>
        </authorList>
    </citation>
    <scope>GENOME REANNOTATION</scope>
    <source>
        <strain>cv. Nipponbare</strain>
    </source>
</reference>
<reference key="3">
    <citation type="journal article" date="2013" name="Rice">
        <title>Improvement of the Oryza sativa Nipponbare reference genome using next generation sequence and optical map data.</title>
        <authorList>
            <person name="Kawahara Y."/>
            <person name="de la Bastide M."/>
            <person name="Hamilton J.P."/>
            <person name="Kanamori H."/>
            <person name="McCombie W.R."/>
            <person name="Ouyang S."/>
            <person name="Schwartz D.C."/>
            <person name="Tanaka T."/>
            <person name="Wu J."/>
            <person name="Zhou S."/>
            <person name="Childs K.L."/>
            <person name="Davidson R.M."/>
            <person name="Lin H."/>
            <person name="Quesada-Ocampo L."/>
            <person name="Vaillancourt B."/>
            <person name="Sakai H."/>
            <person name="Lee S.S."/>
            <person name="Kim J."/>
            <person name="Numa H."/>
            <person name="Itoh T."/>
            <person name="Buell C.R."/>
            <person name="Matsumoto T."/>
        </authorList>
    </citation>
    <scope>GENOME REANNOTATION</scope>
    <source>
        <strain>cv. Nipponbare</strain>
    </source>
</reference>
<reference key="4">
    <citation type="journal article" date="2005" name="PLoS Biol.">
        <title>The genomes of Oryza sativa: a history of duplications.</title>
        <authorList>
            <person name="Yu J."/>
            <person name="Wang J."/>
            <person name="Lin W."/>
            <person name="Li S."/>
            <person name="Li H."/>
            <person name="Zhou J."/>
            <person name="Ni P."/>
            <person name="Dong W."/>
            <person name="Hu S."/>
            <person name="Zeng C."/>
            <person name="Zhang J."/>
            <person name="Zhang Y."/>
            <person name="Li R."/>
            <person name="Xu Z."/>
            <person name="Li S."/>
            <person name="Li X."/>
            <person name="Zheng H."/>
            <person name="Cong L."/>
            <person name="Lin L."/>
            <person name="Yin J."/>
            <person name="Geng J."/>
            <person name="Li G."/>
            <person name="Shi J."/>
            <person name="Liu J."/>
            <person name="Lv H."/>
            <person name="Li J."/>
            <person name="Wang J."/>
            <person name="Deng Y."/>
            <person name="Ran L."/>
            <person name="Shi X."/>
            <person name="Wang X."/>
            <person name="Wu Q."/>
            <person name="Li C."/>
            <person name="Ren X."/>
            <person name="Wang J."/>
            <person name="Wang X."/>
            <person name="Li D."/>
            <person name="Liu D."/>
            <person name="Zhang X."/>
            <person name="Ji Z."/>
            <person name="Zhao W."/>
            <person name="Sun Y."/>
            <person name="Zhang Z."/>
            <person name="Bao J."/>
            <person name="Han Y."/>
            <person name="Dong L."/>
            <person name="Ji J."/>
            <person name="Chen P."/>
            <person name="Wu S."/>
            <person name="Liu J."/>
            <person name="Xiao Y."/>
            <person name="Bu D."/>
            <person name="Tan J."/>
            <person name="Yang L."/>
            <person name="Ye C."/>
            <person name="Zhang J."/>
            <person name="Xu J."/>
            <person name="Zhou Y."/>
            <person name="Yu Y."/>
            <person name="Zhang B."/>
            <person name="Zhuang S."/>
            <person name="Wei H."/>
            <person name="Liu B."/>
            <person name="Lei M."/>
            <person name="Yu H."/>
            <person name="Li Y."/>
            <person name="Xu H."/>
            <person name="Wei S."/>
            <person name="He X."/>
            <person name="Fang L."/>
            <person name="Zhang Z."/>
            <person name="Zhang Y."/>
            <person name="Huang X."/>
            <person name="Su Z."/>
            <person name="Tong W."/>
            <person name="Li J."/>
            <person name="Tong Z."/>
            <person name="Li S."/>
            <person name="Ye J."/>
            <person name="Wang L."/>
            <person name="Fang L."/>
            <person name="Lei T."/>
            <person name="Chen C.-S."/>
            <person name="Chen H.-C."/>
            <person name="Xu Z."/>
            <person name="Li H."/>
            <person name="Huang H."/>
            <person name="Zhang F."/>
            <person name="Xu H."/>
            <person name="Li N."/>
            <person name="Zhao C."/>
            <person name="Li S."/>
            <person name="Dong L."/>
            <person name="Huang Y."/>
            <person name="Li L."/>
            <person name="Xi Y."/>
            <person name="Qi Q."/>
            <person name="Li W."/>
            <person name="Zhang B."/>
            <person name="Hu W."/>
            <person name="Zhang Y."/>
            <person name="Tian X."/>
            <person name="Jiao Y."/>
            <person name="Liang X."/>
            <person name="Jin J."/>
            <person name="Gao L."/>
            <person name="Zheng W."/>
            <person name="Hao B."/>
            <person name="Liu S.-M."/>
            <person name="Wang W."/>
            <person name="Yuan L."/>
            <person name="Cao M."/>
            <person name="McDermott J."/>
            <person name="Samudrala R."/>
            <person name="Wang J."/>
            <person name="Wong G.K.-S."/>
            <person name="Yang H."/>
        </authorList>
    </citation>
    <scope>NUCLEOTIDE SEQUENCE [LARGE SCALE GENOMIC DNA]</scope>
    <source>
        <strain>cv. Nipponbare</strain>
    </source>
</reference>
<reference key="5">
    <citation type="journal article" date="2010" name="Plant Cell">
        <title>Arabidopsis VILLIN1 and VILLIN3 have overlapping and distinct activities in actin bundle formation and turnover.</title>
        <authorList>
            <person name="Khurana P."/>
            <person name="Henty J.L."/>
            <person name="Huang S."/>
            <person name="Staiger A.M."/>
            <person name="Blanchoin L."/>
            <person name="Staiger C.J."/>
        </authorList>
    </citation>
    <scope>FUNCTION</scope>
    <scope>TISSUE SPECIFICITY</scope>
    <scope>GENE FAMILY</scope>
    <scope>NOMENCLATURE</scope>
</reference>
<evidence type="ECO:0000250" key="1">
    <source>
        <dbReference type="UniProtKB" id="O81644"/>
    </source>
</evidence>
<evidence type="ECO:0000255" key="2"/>
<evidence type="ECO:0000255" key="3">
    <source>
        <dbReference type="PROSITE-ProRule" id="PRU00595"/>
    </source>
</evidence>
<evidence type="ECO:0000256" key="4">
    <source>
        <dbReference type="SAM" id="MobiDB-lite"/>
    </source>
</evidence>
<evidence type="ECO:0000269" key="5">
    <source>
    </source>
</evidence>
<evidence type="ECO:0000303" key="6">
    <source>
    </source>
</evidence>
<evidence type="ECO:0000305" key="7"/>
<evidence type="ECO:0000312" key="8">
    <source>
        <dbReference type="EMBL" id="BAD38345.1"/>
    </source>
</evidence>
<evidence type="ECO:0000312" key="9">
    <source>
        <dbReference type="EMBL" id="BAD46401.1"/>
    </source>
</evidence>
<evidence type="ECO:0000312" key="10">
    <source>
        <dbReference type="EMBL" id="BAF20177.1"/>
    </source>
</evidence>
<evidence type="ECO:0000312" key="11">
    <source>
        <dbReference type="EMBL" id="BAS98964.1"/>
    </source>
</evidence>
<evidence type="ECO:0000312" key="12">
    <source>
        <dbReference type="EMBL" id="EEE66162.1"/>
    </source>
</evidence>
<protein>
    <recommendedName>
        <fullName evidence="6">Villin-3</fullName>
    </recommendedName>
</protein>
<sequence length="970" mass="108722">MAVSMREVDAVFQGAGQKDGLEIWRIEKLQAVPVPKESHGRFFTGDSYVILKTTALKNGSFRHDIHYWLGKDTSQDEAGTAAIKTVELDAALGGRAVQYREVQGNETERFLSYFKPCIIPEEGGIASGFRHTEINEREHVTRLFVCRGKHTVHVKEVPFARSSLNHDDIFILDTKSKIFQFNGSNSSIQERAKALEVVQYLKDSNHEGKCDVGSVEDGKLMADADAGEFWGLFGGFAPLPRKTFSDLNGKDSAFSSKLICLNKGQTVPVDFDVLTRELLDSTKCYLLDCGSEIYVWMGRETPLEERKRAGSAAEELLREVNRPKSHIVRLMEGFETVIFRSKFSKWPKKADAVVSDESRGKVAALLKRQGFNVKGLAKAAPVKEEPQPQIDCTGNLQVWRVNGTEKTFLSFSEQCKFYSGDCYIFQYSYPGEEGEECLIGTWFGKKSVQDEKTTAISVASKMVESLKFQAVMVRLYEGKEPAEFFSIFQNLVIFKGGVSTGYKKFVSENGIEDDTYSENGVALFRVQGSGPENMQAIQVDTAATSLNSSYCYVLHDGDTLFTWIGNLSSSMDQELAERQLDVIKPNLQSRMLKEGSEYDQFWKLLGVKSEYPSQKIAKDQESDPHLFSCTFSKGVLKVREIFNFTQDDLMTEDVFILDCHSCVFVWVGQRVDTKMRAQALSVGEKFLELDILMENSSQETPVYVITEGSEPQFFTRFFTWDSAKSAMHGNSFERRLSIVKDGVKPKLDKPKRRPTTSSSHTGRSSVPEKSQRSRSMSFSPDRVRVRGRSPAFNALAANFENPNARNLSTPPPAIRKPSPKSPSSDPTKPPQRAASIAAISASFERPRPTLIPKSIKASPDVNKPQVEASKPKPEANGKDSTPSKDSPTVTPTIQEDLKEGQPENEEGLPVYPYERLRTSSINPVTDIDVTKRETYLSAAEFRERFGMTKEAFAKLPKWKQNRLKIALQLF</sequence>
<gene>
    <name evidence="6" type="primary">VLN3</name>
    <name evidence="7" type="ordered locus">LOC_Os06g44890</name>
    <name evidence="10" type="ordered locus">Os06g0659300</name>
    <name evidence="8" type="ORF">B1047G05.32</name>
    <name evidence="12" type="ORF">OsJ_22231</name>
    <name evidence="9" type="ORF">OSJNBa0051O02.4</name>
    <name evidence="11" type="ORF">OSNPB_060659300</name>
</gene>